<keyword id="KW-0648">Protein biosynthesis</keyword>
<keyword id="KW-1185">Reference proteome</keyword>
<keyword id="KW-0808">Transferase</keyword>
<evidence type="ECO:0000255" key="1">
    <source>
        <dbReference type="HAMAP-Rule" id="MF_00182"/>
    </source>
</evidence>
<comment type="function">
    <text evidence="1">Attaches a formyl group to the free amino group of methionyl-tRNA(fMet). The formyl group appears to play a dual role in the initiator identity of N-formylmethionyl-tRNA by promoting its recognition by IF2 and preventing the misappropriation of this tRNA by the elongation apparatus.</text>
</comment>
<comment type="catalytic activity">
    <reaction evidence="1">
        <text>L-methionyl-tRNA(fMet) + (6R)-10-formyltetrahydrofolate = N-formyl-L-methionyl-tRNA(fMet) + (6S)-5,6,7,8-tetrahydrofolate + H(+)</text>
        <dbReference type="Rhea" id="RHEA:24380"/>
        <dbReference type="Rhea" id="RHEA-COMP:9952"/>
        <dbReference type="Rhea" id="RHEA-COMP:9953"/>
        <dbReference type="ChEBI" id="CHEBI:15378"/>
        <dbReference type="ChEBI" id="CHEBI:57453"/>
        <dbReference type="ChEBI" id="CHEBI:78530"/>
        <dbReference type="ChEBI" id="CHEBI:78844"/>
        <dbReference type="ChEBI" id="CHEBI:195366"/>
        <dbReference type="EC" id="2.1.2.9"/>
    </reaction>
</comment>
<comment type="similarity">
    <text evidence="1">Belongs to the Fmt family.</text>
</comment>
<proteinExistence type="inferred from homology"/>
<organism>
    <name type="scientific">Bradyrhizobium sp. (strain ORS 278)</name>
    <dbReference type="NCBI Taxonomy" id="114615"/>
    <lineage>
        <taxon>Bacteria</taxon>
        <taxon>Pseudomonadati</taxon>
        <taxon>Pseudomonadota</taxon>
        <taxon>Alphaproteobacteria</taxon>
        <taxon>Hyphomicrobiales</taxon>
        <taxon>Nitrobacteraceae</taxon>
        <taxon>Bradyrhizobium</taxon>
    </lineage>
</organism>
<accession>A4YLC0</accession>
<gene>
    <name evidence="1" type="primary">fmt</name>
    <name type="ordered locus">BRADO0771</name>
</gene>
<sequence length="311" mass="33144">MPLRLIFMGTPDFAVPTLLELAGHGHEIVAVYTRAPKPGGRRGLALVPTPIESEARRLGIPVLTPKTLKTEEALAEFRAHEADAAVVVAYGMILPQAILDAPKLGCYNLHASLLPRWRGAAPINRAIMAGDAESGVMVMKMDVGLDTGDVAMAELLAITDAMTASDLHDKLSRIGADLMVRAMAALERGGLTLTKQAEDGVTYAAKIEKAEARIDWTKPAHAVLRHIHGLSPFPGAWSEITIDGEAVRLKILRCALARGTGEPGTVVDDELTIACADSAIRITELQRAGKSPMKAADFLRGTRVAPGLRFG</sequence>
<reference key="1">
    <citation type="journal article" date="2007" name="Science">
        <title>Legumes symbioses: absence of nod genes in photosynthetic bradyrhizobia.</title>
        <authorList>
            <person name="Giraud E."/>
            <person name="Moulin L."/>
            <person name="Vallenet D."/>
            <person name="Barbe V."/>
            <person name="Cytryn E."/>
            <person name="Avarre J.-C."/>
            <person name="Jaubert M."/>
            <person name="Simon D."/>
            <person name="Cartieaux F."/>
            <person name="Prin Y."/>
            <person name="Bena G."/>
            <person name="Hannibal L."/>
            <person name="Fardoux J."/>
            <person name="Kojadinovic M."/>
            <person name="Vuillet L."/>
            <person name="Lajus A."/>
            <person name="Cruveiller S."/>
            <person name="Rouy Z."/>
            <person name="Mangenot S."/>
            <person name="Segurens B."/>
            <person name="Dossat C."/>
            <person name="Franck W.L."/>
            <person name="Chang W.-S."/>
            <person name="Saunders E."/>
            <person name="Bruce D."/>
            <person name="Richardson P."/>
            <person name="Normand P."/>
            <person name="Dreyfus B."/>
            <person name="Pignol D."/>
            <person name="Stacey G."/>
            <person name="Emerich D."/>
            <person name="Vermeglio A."/>
            <person name="Medigue C."/>
            <person name="Sadowsky M."/>
        </authorList>
    </citation>
    <scope>NUCLEOTIDE SEQUENCE [LARGE SCALE GENOMIC DNA]</scope>
    <source>
        <strain>ORS 278</strain>
    </source>
</reference>
<name>FMT_BRASO</name>
<protein>
    <recommendedName>
        <fullName evidence="1">Methionyl-tRNA formyltransferase</fullName>
        <ecNumber evidence="1">2.1.2.9</ecNumber>
    </recommendedName>
</protein>
<dbReference type="EC" id="2.1.2.9" evidence="1"/>
<dbReference type="EMBL" id="CU234118">
    <property type="protein sequence ID" value="CAL74696.1"/>
    <property type="molecule type" value="Genomic_DNA"/>
</dbReference>
<dbReference type="RefSeq" id="WP_011923951.1">
    <property type="nucleotide sequence ID" value="NC_009445.1"/>
</dbReference>
<dbReference type="SMR" id="A4YLC0"/>
<dbReference type="STRING" id="114615.BRADO0771"/>
<dbReference type="KEGG" id="bra:BRADO0771"/>
<dbReference type="eggNOG" id="COG0223">
    <property type="taxonomic scope" value="Bacteria"/>
</dbReference>
<dbReference type="HOGENOM" id="CLU_033347_1_2_5"/>
<dbReference type="OrthoDB" id="9802815at2"/>
<dbReference type="Proteomes" id="UP000001994">
    <property type="component" value="Chromosome"/>
</dbReference>
<dbReference type="GO" id="GO:0005829">
    <property type="term" value="C:cytosol"/>
    <property type="evidence" value="ECO:0007669"/>
    <property type="project" value="TreeGrafter"/>
</dbReference>
<dbReference type="GO" id="GO:0004479">
    <property type="term" value="F:methionyl-tRNA formyltransferase activity"/>
    <property type="evidence" value="ECO:0007669"/>
    <property type="project" value="UniProtKB-UniRule"/>
</dbReference>
<dbReference type="CDD" id="cd08646">
    <property type="entry name" value="FMT_core_Met-tRNA-FMT_N"/>
    <property type="match status" value="1"/>
</dbReference>
<dbReference type="CDD" id="cd08704">
    <property type="entry name" value="Met_tRNA_FMT_C"/>
    <property type="match status" value="1"/>
</dbReference>
<dbReference type="FunFam" id="3.40.50.12230:FF:000001">
    <property type="entry name" value="Methionyl-tRNA formyltransferase"/>
    <property type="match status" value="1"/>
</dbReference>
<dbReference type="Gene3D" id="3.40.50.12230">
    <property type="match status" value="1"/>
</dbReference>
<dbReference type="HAMAP" id="MF_00182">
    <property type="entry name" value="Formyl_trans"/>
    <property type="match status" value="1"/>
</dbReference>
<dbReference type="InterPro" id="IPR005794">
    <property type="entry name" value="Fmt"/>
</dbReference>
<dbReference type="InterPro" id="IPR005793">
    <property type="entry name" value="Formyl_trans_C"/>
</dbReference>
<dbReference type="InterPro" id="IPR002376">
    <property type="entry name" value="Formyl_transf_N"/>
</dbReference>
<dbReference type="InterPro" id="IPR036477">
    <property type="entry name" value="Formyl_transf_N_sf"/>
</dbReference>
<dbReference type="InterPro" id="IPR011034">
    <property type="entry name" value="Formyl_transferase-like_C_sf"/>
</dbReference>
<dbReference type="InterPro" id="IPR001555">
    <property type="entry name" value="GART_AS"/>
</dbReference>
<dbReference type="InterPro" id="IPR044135">
    <property type="entry name" value="Met-tRNA-FMT_C"/>
</dbReference>
<dbReference type="InterPro" id="IPR041711">
    <property type="entry name" value="Met-tRNA-FMT_N"/>
</dbReference>
<dbReference type="NCBIfam" id="TIGR00460">
    <property type="entry name" value="fmt"/>
    <property type="match status" value="1"/>
</dbReference>
<dbReference type="PANTHER" id="PTHR11138">
    <property type="entry name" value="METHIONYL-TRNA FORMYLTRANSFERASE"/>
    <property type="match status" value="1"/>
</dbReference>
<dbReference type="PANTHER" id="PTHR11138:SF5">
    <property type="entry name" value="METHIONYL-TRNA FORMYLTRANSFERASE, MITOCHONDRIAL"/>
    <property type="match status" value="1"/>
</dbReference>
<dbReference type="Pfam" id="PF02911">
    <property type="entry name" value="Formyl_trans_C"/>
    <property type="match status" value="1"/>
</dbReference>
<dbReference type="Pfam" id="PF00551">
    <property type="entry name" value="Formyl_trans_N"/>
    <property type="match status" value="1"/>
</dbReference>
<dbReference type="SUPFAM" id="SSF50486">
    <property type="entry name" value="FMT C-terminal domain-like"/>
    <property type="match status" value="1"/>
</dbReference>
<dbReference type="SUPFAM" id="SSF53328">
    <property type="entry name" value="Formyltransferase"/>
    <property type="match status" value="1"/>
</dbReference>
<dbReference type="PROSITE" id="PS00373">
    <property type="entry name" value="GART"/>
    <property type="match status" value="1"/>
</dbReference>
<feature type="chain" id="PRO_1000020027" description="Methionyl-tRNA formyltransferase">
    <location>
        <begin position="1"/>
        <end position="311"/>
    </location>
</feature>
<feature type="binding site" evidence="1">
    <location>
        <begin position="112"/>
        <end position="115"/>
    </location>
    <ligand>
        <name>(6S)-5,6,7,8-tetrahydrofolate</name>
        <dbReference type="ChEBI" id="CHEBI:57453"/>
    </ligand>
</feature>